<keyword id="KW-0963">Cytoplasm</keyword>
<keyword id="KW-0507">mRNA processing</keyword>
<keyword id="KW-0508">mRNA splicing</keyword>
<keyword id="KW-0539">Nucleus</keyword>
<keyword id="KW-1185">Reference proteome</keyword>
<keyword id="KW-0687">Ribonucleoprotein</keyword>
<keyword id="KW-0694">RNA-binding</keyword>
<keyword id="KW-0698">rRNA processing</keyword>
<keyword id="KW-0747">Spliceosome</keyword>
<keyword id="KW-0819">tRNA processing</keyword>
<proteinExistence type="inferred from homology"/>
<feature type="chain" id="PRO_0000333594" description="U6 snRNA-associated Sm-like protein LSm6">
    <location>
        <begin position="1"/>
        <end position="95"/>
    </location>
</feature>
<feature type="domain" description="Sm" evidence="2">
    <location>
        <begin position="23"/>
        <end position="95"/>
    </location>
</feature>
<feature type="region of interest" description="Disordered" evidence="3">
    <location>
        <begin position="1"/>
        <end position="27"/>
    </location>
</feature>
<feature type="compositionally biased region" description="Pro residues" evidence="3">
    <location>
        <begin position="1"/>
        <end position="17"/>
    </location>
</feature>
<organism>
    <name type="scientific">Coprinopsis cinerea (strain Okayama-7 / 130 / ATCC MYA-4618 / FGSC 9003)</name>
    <name type="common">Inky cap fungus</name>
    <name type="synonym">Hormographiella aspergillata</name>
    <dbReference type="NCBI Taxonomy" id="240176"/>
    <lineage>
        <taxon>Eukaryota</taxon>
        <taxon>Fungi</taxon>
        <taxon>Dikarya</taxon>
        <taxon>Basidiomycota</taxon>
        <taxon>Agaricomycotina</taxon>
        <taxon>Agaricomycetes</taxon>
        <taxon>Agaricomycetidae</taxon>
        <taxon>Agaricales</taxon>
        <taxon>Agaricineae</taxon>
        <taxon>Psathyrellaceae</taxon>
        <taxon>Coprinopsis</taxon>
    </lineage>
</organism>
<dbReference type="EMBL" id="AACS02000010">
    <property type="protein sequence ID" value="EAU87855.2"/>
    <property type="molecule type" value="Genomic_DNA"/>
</dbReference>
<dbReference type="RefSeq" id="XP_001833825.2">
    <property type="nucleotide sequence ID" value="XM_001833773.2"/>
</dbReference>
<dbReference type="SMR" id="A8NHT8"/>
<dbReference type="FunCoup" id="A8NHT8">
    <property type="interactions" value="479"/>
</dbReference>
<dbReference type="STRING" id="240176.A8NHT8"/>
<dbReference type="GeneID" id="6010327"/>
<dbReference type="KEGG" id="cci:CC1G_01502"/>
<dbReference type="VEuPathDB" id="FungiDB:CC1G_01502"/>
<dbReference type="eggNOG" id="KOG1783">
    <property type="taxonomic scope" value="Eukaryota"/>
</dbReference>
<dbReference type="HOGENOM" id="CLU_076902_7_2_1"/>
<dbReference type="InParanoid" id="A8NHT8"/>
<dbReference type="OMA" id="EQTVEYV"/>
<dbReference type="OrthoDB" id="268799at2759"/>
<dbReference type="Proteomes" id="UP000001861">
    <property type="component" value="Unassembled WGS sequence"/>
</dbReference>
<dbReference type="GO" id="GO:0005730">
    <property type="term" value="C:nucleolus"/>
    <property type="evidence" value="ECO:0007669"/>
    <property type="project" value="TreeGrafter"/>
</dbReference>
<dbReference type="GO" id="GO:0000932">
    <property type="term" value="C:P-body"/>
    <property type="evidence" value="ECO:0007669"/>
    <property type="project" value="TreeGrafter"/>
</dbReference>
<dbReference type="GO" id="GO:0005732">
    <property type="term" value="C:sno(s)RNA-containing ribonucleoprotein complex"/>
    <property type="evidence" value="ECO:0007669"/>
    <property type="project" value="TreeGrafter"/>
</dbReference>
<dbReference type="GO" id="GO:0005681">
    <property type="term" value="C:spliceosomal complex"/>
    <property type="evidence" value="ECO:0007669"/>
    <property type="project" value="UniProtKB-KW"/>
</dbReference>
<dbReference type="GO" id="GO:0046540">
    <property type="term" value="C:U4/U6 x U5 tri-snRNP complex"/>
    <property type="evidence" value="ECO:0007669"/>
    <property type="project" value="TreeGrafter"/>
</dbReference>
<dbReference type="GO" id="GO:0005688">
    <property type="term" value="C:U6 snRNP"/>
    <property type="evidence" value="ECO:0007669"/>
    <property type="project" value="TreeGrafter"/>
</dbReference>
<dbReference type="GO" id="GO:0003723">
    <property type="term" value="F:RNA binding"/>
    <property type="evidence" value="ECO:0007669"/>
    <property type="project" value="UniProtKB-KW"/>
</dbReference>
<dbReference type="GO" id="GO:0030490">
    <property type="term" value="P:maturation of SSU-rRNA"/>
    <property type="evidence" value="ECO:0007669"/>
    <property type="project" value="TreeGrafter"/>
</dbReference>
<dbReference type="GO" id="GO:0000398">
    <property type="term" value="P:mRNA splicing, via spliceosome"/>
    <property type="evidence" value="ECO:0007669"/>
    <property type="project" value="InterPro"/>
</dbReference>
<dbReference type="GO" id="GO:0008033">
    <property type="term" value="P:tRNA processing"/>
    <property type="evidence" value="ECO:0007669"/>
    <property type="project" value="UniProtKB-KW"/>
</dbReference>
<dbReference type="CDD" id="cd01726">
    <property type="entry name" value="LSm6"/>
    <property type="match status" value="1"/>
</dbReference>
<dbReference type="FunFam" id="2.30.30.100:FF:000044">
    <property type="entry name" value="Probable U6 snRNA-associated Sm-like protein LSm6"/>
    <property type="match status" value="1"/>
</dbReference>
<dbReference type="Gene3D" id="2.30.30.100">
    <property type="match status" value="1"/>
</dbReference>
<dbReference type="InterPro" id="IPR016487">
    <property type="entry name" value="Lsm6/sSmF"/>
</dbReference>
<dbReference type="InterPro" id="IPR010920">
    <property type="entry name" value="LSM_dom_sf"/>
</dbReference>
<dbReference type="InterPro" id="IPR047575">
    <property type="entry name" value="Sm"/>
</dbReference>
<dbReference type="InterPro" id="IPR001163">
    <property type="entry name" value="Sm_dom_euk/arc"/>
</dbReference>
<dbReference type="PANTHER" id="PTHR11021">
    <property type="entry name" value="SMALL NUCLEAR RIBONUCLEOPROTEIN F SNRNP-F"/>
    <property type="match status" value="1"/>
</dbReference>
<dbReference type="PANTHER" id="PTHR11021:SF1">
    <property type="entry name" value="U6 SNRNA-ASSOCIATED SM-LIKE PROTEIN LSM6"/>
    <property type="match status" value="1"/>
</dbReference>
<dbReference type="Pfam" id="PF01423">
    <property type="entry name" value="LSM"/>
    <property type="match status" value="1"/>
</dbReference>
<dbReference type="SMART" id="SM00651">
    <property type="entry name" value="Sm"/>
    <property type="match status" value="1"/>
</dbReference>
<dbReference type="SUPFAM" id="SSF50182">
    <property type="entry name" value="Sm-like ribonucleoproteins"/>
    <property type="match status" value="1"/>
</dbReference>
<dbReference type="PROSITE" id="PS52002">
    <property type="entry name" value="SM"/>
    <property type="match status" value="1"/>
</dbReference>
<evidence type="ECO:0000250" key="1"/>
<evidence type="ECO:0000255" key="2">
    <source>
        <dbReference type="PROSITE-ProRule" id="PRU01346"/>
    </source>
</evidence>
<evidence type="ECO:0000256" key="3">
    <source>
        <dbReference type="SAM" id="MobiDB-lite"/>
    </source>
</evidence>
<evidence type="ECO:0000305" key="4"/>
<reference key="1">
    <citation type="journal article" date="2010" name="Proc. Natl. Acad. Sci. U.S.A.">
        <title>Insights into evolution of multicellular fungi from the assembled chromosomes of the mushroom Coprinopsis cinerea (Coprinus cinereus).</title>
        <authorList>
            <person name="Stajich J.E."/>
            <person name="Wilke S.K."/>
            <person name="Ahren D."/>
            <person name="Au C.H."/>
            <person name="Birren B.W."/>
            <person name="Borodovsky M."/>
            <person name="Burns C."/>
            <person name="Canbaeck B."/>
            <person name="Casselton L.A."/>
            <person name="Cheng C.K."/>
            <person name="Deng J."/>
            <person name="Dietrich F.S."/>
            <person name="Fargo D.C."/>
            <person name="Farman M.L."/>
            <person name="Gathman A.C."/>
            <person name="Goldberg J."/>
            <person name="Guigo R."/>
            <person name="Hoegger P.J."/>
            <person name="Hooker J.B."/>
            <person name="Huggins A."/>
            <person name="James T.Y."/>
            <person name="Kamada T."/>
            <person name="Kilaru S."/>
            <person name="Kodira C."/>
            <person name="Kuees U."/>
            <person name="Kupfer D."/>
            <person name="Kwan H.S."/>
            <person name="Lomsadze A."/>
            <person name="Li W."/>
            <person name="Lilly W.W."/>
            <person name="Ma L.-J."/>
            <person name="Mackey A.J."/>
            <person name="Manning G."/>
            <person name="Martin F."/>
            <person name="Muraguchi H."/>
            <person name="Natvig D.O."/>
            <person name="Palmerini H."/>
            <person name="Ramesh M.A."/>
            <person name="Rehmeyer C.J."/>
            <person name="Roe B.A."/>
            <person name="Shenoy N."/>
            <person name="Stanke M."/>
            <person name="Ter-Hovhannisyan V."/>
            <person name="Tunlid A."/>
            <person name="Velagapudi R."/>
            <person name="Vision T.J."/>
            <person name="Zeng Q."/>
            <person name="Zolan M.E."/>
            <person name="Pukkila P.J."/>
        </authorList>
    </citation>
    <scope>NUCLEOTIDE SEQUENCE [LARGE SCALE GENOMIC DNA]</scope>
    <source>
        <strain>Okayama-7 / 130 / ATCC MYA-4618 / FGSC 9003</strain>
    </source>
</reference>
<accession>A8NHT8</accession>
<name>LSM6_COPC7</name>
<gene>
    <name type="primary">LSM6</name>
    <name type="ORF">CC1G_01502</name>
</gene>
<sequence>MADSPSPAPQPPQPPAPTTHTGSPTDFLKGVVGKRVVVRLLSGVDYRGILSCLDGYMNIAMEQTEESVNGKVVNRYGDAFIRGNNVLYISADEPI</sequence>
<protein>
    <recommendedName>
        <fullName>U6 snRNA-associated Sm-like protein LSm6</fullName>
    </recommendedName>
</protein>
<comment type="function">
    <text evidence="1">Component of LSm protein complexes, which are involved in RNA processing and may function in a chaperone-like manner, facilitating the efficient association of RNA processing factors with their substrates. Component of the cytoplasmic LSM1-LSM7 complex, which is thought to be involved in mRNA degradation by activating the decapping step in the 5'-to-3' mRNA decay pathway. Component of the nuclear LSM2-LSM8 complex, which is involved in splicing of nuclear mRNAs. LSM2-LSM8 associates with multiple snRNP complexes containing the U6 snRNA (U4/U6 di-snRNP, spliceosomal U4/U6.U5 tri-snRNP, and free U6 snRNP). It binds directly to the 3'-terminal U-tract of U6 snRNA and plays a role in the biogenesis and stability of the U6 snRNP and U4/U6 snRNP complexes. LSM2-LSM8 probably also is involved degradation of nuclear pre-mRNA by targeting them for decapping, and in processing of pre-tRNAs, pre-rRNAs and U3 snoRNA (By similarity).</text>
</comment>
<comment type="subunit">
    <text evidence="1">Component of the heptameric LSM1-LSM7 complex, which consists of LSM1, LSM2, LSM3, LSM4, LSM5, LSM6 and LSM7. Component of the heptameric LSM2-LSM8 complex, which consists of LSM2, LSM3, LSM4, LSM5, LSM6, LSM7 and LSM8. The LSm subunits form a seven-membered ring structure with a doughnut shape (By similarity).</text>
</comment>
<comment type="subcellular location">
    <subcellularLocation>
        <location evidence="1">Cytoplasm</location>
    </subcellularLocation>
    <subcellularLocation>
        <location evidence="1">Nucleus</location>
    </subcellularLocation>
</comment>
<comment type="similarity">
    <text evidence="4">Belongs to the snRNP Sm proteins family. SmF/LSm6 subfamily.</text>
</comment>